<gene>
    <name evidence="1" type="primary">lexA</name>
    <name type="ordered locus">LMHCC_1268</name>
</gene>
<comment type="function">
    <text evidence="1">Represses a number of genes involved in the response to DNA damage (SOS response), including recA and lexA. In the presence of single-stranded DNA, RecA interacts with LexA causing an autocatalytic cleavage which disrupts the DNA-binding part of LexA, leading to derepression of the SOS regulon and eventually DNA repair.</text>
</comment>
<comment type="catalytic activity">
    <reaction evidence="1">
        <text>Hydrolysis of Ala-|-Gly bond in repressor LexA.</text>
        <dbReference type="EC" id="3.4.21.88"/>
    </reaction>
</comment>
<comment type="subunit">
    <text evidence="1">Homodimer.</text>
</comment>
<comment type="similarity">
    <text evidence="1">Belongs to the peptidase S24 family.</text>
</comment>
<evidence type="ECO:0000255" key="1">
    <source>
        <dbReference type="HAMAP-Rule" id="MF_00015"/>
    </source>
</evidence>
<accession>B8DG25</accession>
<protein>
    <recommendedName>
        <fullName evidence="1">LexA repressor</fullName>
        <ecNumber evidence="1">3.4.21.88</ecNumber>
    </recommendedName>
</protein>
<dbReference type="EC" id="3.4.21.88" evidence="1"/>
<dbReference type="EMBL" id="CP001175">
    <property type="protein sequence ID" value="ACK39615.1"/>
    <property type="molecule type" value="Genomic_DNA"/>
</dbReference>
<dbReference type="RefSeq" id="WP_003723438.1">
    <property type="nucleotide sequence ID" value="NC_011660.1"/>
</dbReference>
<dbReference type="SMR" id="B8DG25"/>
<dbReference type="MEROPS" id="S24.001"/>
<dbReference type="GeneID" id="86846725"/>
<dbReference type="KEGG" id="lmh:LMHCC_1268"/>
<dbReference type="HOGENOM" id="CLU_066192_45_1_9"/>
<dbReference type="GO" id="GO:0003677">
    <property type="term" value="F:DNA binding"/>
    <property type="evidence" value="ECO:0007669"/>
    <property type="project" value="UniProtKB-UniRule"/>
</dbReference>
<dbReference type="GO" id="GO:0004252">
    <property type="term" value="F:serine-type endopeptidase activity"/>
    <property type="evidence" value="ECO:0007669"/>
    <property type="project" value="UniProtKB-UniRule"/>
</dbReference>
<dbReference type="GO" id="GO:0006281">
    <property type="term" value="P:DNA repair"/>
    <property type="evidence" value="ECO:0007669"/>
    <property type="project" value="UniProtKB-UniRule"/>
</dbReference>
<dbReference type="GO" id="GO:0006260">
    <property type="term" value="P:DNA replication"/>
    <property type="evidence" value="ECO:0007669"/>
    <property type="project" value="UniProtKB-UniRule"/>
</dbReference>
<dbReference type="GO" id="GO:0045892">
    <property type="term" value="P:negative regulation of DNA-templated transcription"/>
    <property type="evidence" value="ECO:0007669"/>
    <property type="project" value="UniProtKB-UniRule"/>
</dbReference>
<dbReference type="GO" id="GO:0006508">
    <property type="term" value="P:proteolysis"/>
    <property type="evidence" value="ECO:0007669"/>
    <property type="project" value="InterPro"/>
</dbReference>
<dbReference type="GO" id="GO:0009432">
    <property type="term" value="P:SOS response"/>
    <property type="evidence" value="ECO:0007669"/>
    <property type="project" value="UniProtKB-UniRule"/>
</dbReference>
<dbReference type="CDD" id="cd00090">
    <property type="entry name" value="HTH_ARSR"/>
    <property type="match status" value="1"/>
</dbReference>
<dbReference type="CDD" id="cd06529">
    <property type="entry name" value="S24_LexA-like"/>
    <property type="match status" value="1"/>
</dbReference>
<dbReference type="FunFam" id="1.10.10.10:FF:000009">
    <property type="entry name" value="LexA repressor"/>
    <property type="match status" value="1"/>
</dbReference>
<dbReference type="FunFam" id="2.10.109.10:FF:000001">
    <property type="entry name" value="LexA repressor"/>
    <property type="match status" value="1"/>
</dbReference>
<dbReference type="Gene3D" id="2.10.109.10">
    <property type="entry name" value="Umud Fragment, subunit A"/>
    <property type="match status" value="1"/>
</dbReference>
<dbReference type="Gene3D" id="1.10.10.10">
    <property type="entry name" value="Winged helix-like DNA-binding domain superfamily/Winged helix DNA-binding domain"/>
    <property type="match status" value="1"/>
</dbReference>
<dbReference type="HAMAP" id="MF_00015">
    <property type="entry name" value="LexA"/>
    <property type="match status" value="1"/>
</dbReference>
<dbReference type="InterPro" id="IPR011991">
    <property type="entry name" value="ArsR-like_HTH"/>
</dbReference>
<dbReference type="InterPro" id="IPR006200">
    <property type="entry name" value="LexA"/>
</dbReference>
<dbReference type="InterPro" id="IPR039418">
    <property type="entry name" value="LexA-like"/>
</dbReference>
<dbReference type="InterPro" id="IPR036286">
    <property type="entry name" value="LexA/Signal_pep-like_sf"/>
</dbReference>
<dbReference type="InterPro" id="IPR006199">
    <property type="entry name" value="LexA_DNA-bd_dom"/>
</dbReference>
<dbReference type="InterPro" id="IPR050077">
    <property type="entry name" value="LexA_repressor"/>
</dbReference>
<dbReference type="InterPro" id="IPR006197">
    <property type="entry name" value="Peptidase_S24_LexA"/>
</dbReference>
<dbReference type="InterPro" id="IPR015927">
    <property type="entry name" value="Peptidase_S24_S26A/B/C"/>
</dbReference>
<dbReference type="InterPro" id="IPR036388">
    <property type="entry name" value="WH-like_DNA-bd_sf"/>
</dbReference>
<dbReference type="InterPro" id="IPR036390">
    <property type="entry name" value="WH_DNA-bd_sf"/>
</dbReference>
<dbReference type="NCBIfam" id="TIGR00498">
    <property type="entry name" value="lexA"/>
    <property type="match status" value="1"/>
</dbReference>
<dbReference type="PANTHER" id="PTHR33516">
    <property type="entry name" value="LEXA REPRESSOR"/>
    <property type="match status" value="1"/>
</dbReference>
<dbReference type="PANTHER" id="PTHR33516:SF2">
    <property type="entry name" value="LEXA REPRESSOR-RELATED"/>
    <property type="match status" value="1"/>
</dbReference>
<dbReference type="Pfam" id="PF01726">
    <property type="entry name" value="LexA_DNA_bind"/>
    <property type="match status" value="1"/>
</dbReference>
<dbReference type="Pfam" id="PF00717">
    <property type="entry name" value="Peptidase_S24"/>
    <property type="match status" value="1"/>
</dbReference>
<dbReference type="PRINTS" id="PR00726">
    <property type="entry name" value="LEXASERPTASE"/>
</dbReference>
<dbReference type="SUPFAM" id="SSF51306">
    <property type="entry name" value="LexA/Signal peptidase"/>
    <property type="match status" value="1"/>
</dbReference>
<dbReference type="SUPFAM" id="SSF46785">
    <property type="entry name" value="Winged helix' DNA-binding domain"/>
    <property type="match status" value="1"/>
</dbReference>
<feature type="chain" id="PRO_1000116608" description="LexA repressor">
    <location>
        <begin position="1"/>
        <end position="204"/>
    </location>
</feature>
<feature type="DNA-binding region" description="H-T-H motif" evidence="1">
    <location>
        <begin position="27"/>
        <end position="47"/>
    </location>
</feature>
<feature type="active site" description="For autocatalytic cleavage activity" evidence="1">
    <location>
        <position position="126"/>
    </location>
</feature>
<feature type="active site" description="For autocatalytic cleavage activity" evidence="1">
    <location>
        <position position="164"/>
    </location>
</feature>
<feature type="site" description="Cleavage; by autolysis" evidence="1">
    <location>
        <begin position="90"/>
        <end position="91"/>
    </location>
</feature>
<organism>
    <name type="scientific">Listeria monocytogenes serotype 4a (strain HCC23)</name>
    <dbReference type="NCBI Taxonomy" id="552536"/>
    <lineage>
        <taxon>Bacteria</taxon>
        <taxon>Bacillati</taxon>
        <taxon>Bacillota</taxon>
        <taxon>Bacilli</taxon>
        <taxon>Bacillales</taxon>
        <taxon>Listeriaceae</taxon>
        <taxon>Listeria</taxon>
    </lineage>
</organism>
<keyword id="KW-0068">Autocatalytic cleavage</keyword>
<keyword id="KW-0227">DNA damage</keyword>
<keyword id="KW-0234">DNA repair</keyword>
<keyword id="KW-0235">DNA replication</keyword>
<keyword id="KW-0238">DNA-binding</keyword>
<keyword id="KW-0378">Hydrolase</keyword>
<keyword id="KW-0678">Repressor</keyword>
<keyword id="KW-0742">SOS response</keyword>
<keyword id="KW-0804">Transcription</keyword>
<keyword id="KW-0805">Transcription regulation</keyword>
<name>LEXA_LISMH</name>
<sequence>MKISKRQQDIYEFIKSEVKEKGYPPSVREIGEAVGLASSSTVHGHLARLEGKGLIRRDPTKPRAIEILSLEDEAETPNVVNIPIIGKVTAGMPITAIENIDEYFPLPEYMAAGETNVFMLEIDGESMINAGILDGDKVIVRQQSSAINGEIVVAMTDENEATCKRFYKEANHFRLQPENDALEPILLNNVTILGKVIGLYRDIR</sequence>
<proteinExistence type="inferred from homology"/>
<reference key="1">
    <citation type="journal article" date="2011" name="J. Bacteriol.">
        <title>Genome sequence of lineage III Listeria monocytogenes strain HCC23.</title>
        <authorList>
            <person name="Steele C.L."/>
            <person name="Donaldson J.R."/>
            <person name="Paul D."/>
            <person name="Banes M.M."/>
            <person name="Arick T."/>
            <person name="Bridges S.M."/>
            <person name="Lawrence M.L."/>
        </authorList>
    </citation>
    <scope>NUCLEOTIDE SEQUENCE [LARGE SCALE GENOMIC DNA]</scope>
    <source>
        <strain>HCC23</strain>
    </source>
</reference>